<proteinExistence type="evidence at protein level"/>
<accession>Q9GZ71</accession>
<keyword id="KW-0020">Allergen</keyword>
<keyword id="KW-0175">Coiled coil</keyword>
<keyword id="KW-0514">Muscle protein</keyword>
<keyword id="KW-0677">Repeat</keyword>
<dbReference type="EMBL" id="AF216518">
    <property type="protein sequence ID" value="AAG08987.1"/>
    <property type="molecule type" value="mRNA"/>
</dbReference>
<dbReference type="SMR" id="Q9GZ71"/>
<dbReference type="Allergome" id="822">
    <property type="allergen name" value="Hal d 1"/>
</dbReference>
<dbReference type="GO" id="GO:0042803">
    <property type="term" value="F:protein homodimerization activity"/>
    <property type="evidence" value="ECO:0000250"/>
    <property type="project" value="UniProtKB"/>
</dbReference>
<dbReference type="GO" id="GO:0006937">
    <property type="term" value="P:regulation of muscle contraction"/>
    <property type="evidence" value="ECO:0000250"/>
    <property type="project" value="UniProtKB"/>
</dbReference>
<dbReference type="FunFam" id="1.20.5.170:FF:000005">
    <property type="entry name" value="Tropomyosin alpha-1 chain"/>
    <property type="match status" value="1"/>
</dbReference>
<dbReference type="FunFam" id="1.20.5.170:FF:000001">
    <property type="entry name" value="Tropomyosin alpha-1 chain isoform 1"/>
    <property type="match status" value="1"/>
</dbReference>
<dbReference type="FunFam" id="1.20.5.340:FF:000001">
    <property type="entry name" value="Tropomyosin alpha-1 chain isoform 2"/>
    <property type="match status" value="1"/>
</dbReference>
<dbReference type="Gene3D" id="1.20.5.170">
    <property type="match status" value="2"/>
</dbReference>
<dbReference type="Gene3D" id="1.20.5.340">
    <property type="match status" value="1"/>
</dbReference>
<dbReference type="InterPro" id="IPR000533">
    <property type="entry name" value="Tropomyosin"/>
</dbReference>
<dbReference type="PANTHER" id="PTHR19269">
    <property type="entry name" value="TROPOMYOSIN"/>
    <property type="match status" value="1"/>
</dbReference>
<dbReference type="Pfam" id="PF00261">
    <property type="entry name" value="Tropomyosin"/>
    <property type="match status" value="1"/>
</dbReference>
<dbReference type="PRINTS" id="PR00194">
    <property type="entry name" value="TROPOMYOSIN"/>
</dbReference>
<dbReference type="SUPFAM" id="SSF57997">
    <property type="entry name" value="Tropomyosin"/>
    <property type="match status" value="1"/>
</dbReference>
<dbReference type="PROSITE" id="PS00326">
    <property type="entry name" value="TROPOMYOSIN"/>
    <property type="match status" value="1"/>
</dbReference>
<feature type="chain" id="PRO_0000205665" description="Tropomyosin">
    <location>
        <begin position="1"/>
        <end position="284"/>
    </location>
</feature>
<feature type="coiled-coil region" evidence="3">
    <location>
        <begin position="1"/>
        <end position="273"/>
    </location>
</feature>
<protein>
    <recommendedName>
        <fullName evidence="5">Tropomyosin</fullName>
    </recommendedName>
    <allergenName evidence="5">Hal d 1</allergenName>
</protein>
<reference key="1">
    <citation type="journal article" date="2000" name="Mar. Biotechnol.">
        <title>Tropomyosin Is the Major Mollusk Allergen: Reverse Transcriptase Polymerase Chain Reaction, Expression and IgE Reactivity.</title>
        <authorList>
            <person name="Chu K.H."/>
            <person name="Wong S.H."/>
            <person name="Leung P.S."/>
        </authorList>
    </citation>
    <scope>NUCLEOTIDE SEQUENCE [MRNA]</scope>
    <scope>ALLERGEN</scope>
    <source>
        <tissue evidence="5">Adductor muscle</tissue>
    </source>
</reference>
<evidence type="ECO:0000250" key="1">
    <source>
        <dbReference type="UniProtKB" id="A2V735"/>
    </source>
</evidence>
<evidence type="ECO:0000250" key="2">
    <source>
        <dbReference type="UniProtKB" id="Q22866"/>
    </source>
</evidence>
<evidence type="ECO:0000255" key="3"/>
<evidence type="ECO:0000269" key="4">
    <source>
    </source>
</evidence>
<evidence type="ECO:0000303" key="5">
    <source>
    </source>
</evidence>
<evidence type="ECO:0000305" key="6"/>
<comment type="function">
    <text evidence="2">Tropomyosin, in association with the troponin complex, plays a central role in the calcium dependent regulation of muscle contraction.</text>
</comment>
<comment type="subunit">
    <text evidence="1">Homodimer.</text>
</comment>
<comment type="domain">
    <text evidence="6">The molecule is in a coiled coil structure that is formed by 2 polypeptide chains. The sequence exhibits a prominent seven-residues periodicity.</text>
</comment>
<comment type="allergen">
    <text evidence="4">Causes an allergic reaction in human. Binds to IgE of patients allergic to shellfish (mollusks and crustaceans).</text>
</comment>
<comment type="similarity">
    <text evidence="6">Belongs to the tropomyosin family.</text>
</comment>
<name>TPM_HALDV</name>
<sequence>MDAIKKKMLAMKMEKENAVDRAEQNEQKLRDTEEQKAKIEEDLNNLQKKCANLENDFDNVNEQLQEAMAKLETSEKRVTEMEQEVSGTTRKITLLEEDLERNEERLQTATERLEEASKAADESERGARVLESRSLADDERIDQLEAQLKEAKYIAEDAERKYDEAARKLAITEVDLERAEARLEAAEAKILELEEELKVVGNNMKSLEISEQEASQREDSYEETIRDLTQRLKDAENRATEAERTVSKLQKEVDRLEDELLAEKEKYKAISDELDQTFAELAGY</sequence>
<organism>
    <name type="scientific">Haliotis diversicolor</name>
    <name type="common">Abalone</name>
    <name type="synonym">Sulculus diversicolor</name>
    <dbReference type="NCBI Taxonomy" id="36095"/>
    <lineage>
        <taxon>Eukaryota</taxon>
        <taxon>Metazoa</taxon>
        <taxon>Spiralia</taxon>
        <taxon>Lophotrochozoa</taxon>
        <taxon>Mollusca</taxon>
        <taxon>Gastropoda</taxon>
        <taxon>Vetigastropoda</taxon>
        <taxon>Lepetellida</taxon>
        <taxon>Haliotoidea</taxon>
        <taxon>Haliotidae</taxon>
        <taxon>Haliotis</taxon>
    </lineage>
</organism>